<organism>
    <name type="scientific">Campylobacter jejuni subsp. doylei (strain ATCC BAA-1458 / RM4099 / 269.97)</name>
    <dbReference type="NCBI Taxonomy" id="360109"/>
    <lineage>
        <taxon>Bacteria</taxon>
        <taxon>Pseudomonadati</taxon>
        <taxon>Campylobacterota</taxon>
        <taxon>Epsilonproteobacteria</taxon>
        <taxon>Campylobacterales</taxon>
        <taxon>Campylobacteraceae</taxon>
        <taxon>Campylobacter</taxon>
    </lineage>
</organism>
<comment type="function">
    <text evidence="1">F(1)F(0) ATP synthase produces ATP from ADP in the presence of a proton or sodium gradient. F-type ATPases consist of two structural domains, F(1) containing the extramembraneous catalytic core and F(0) containing the membrane proton channel, linked together by a central stalk and a peripheral stalk. During catalysis, ATP synthesis in the catalytic domain of F(1) is coupled via a rotary mechanism of the central stalk subunits to proton translocation.</text>
</comment>
<comment type="function">
    <text evidence="1">This protein is part of the stalk that links CF(0) to CF(1). It either transmits conformational changes from CF(0) to CF(1) or is implicated in proton conduction.</text>
</comment>
<comment type="subunit">
    <text evidence="1">F-type ATPases have 2 components, F(1) - the catalytic core - and F(0) - the membrane proton channel. F(1) has five subunits: alpha(3), beta(3), gamma(1), delta(1), epsilon(1). F(0) has three main subunits: a(1), b(2) and c(10-14). The alpha and beta chains form an alternating ring which encloses part of the gamma chain. F(1) is attached to F(0) by a central stalk formed by the gamma and epsilon chains, while a peripheral stalk is formed by the delta and b chains.</text>
</comment>
<comment type="subcellular location">
    <subcellularLocation>
        <location evidence="1">Cell inner membrane</location>
        <topology evidence="1">Peripheral membrane protein</topology>
    </subcellularLocation>
</comment>
<comment type="similarity">
    <text evidence="1">Belongs to the ATPase delta chain family.</text>
</comment>
<gene>
    <name evidence="1" type="primary">atpH</name>
    <name type="ordered locus">JJD26997_0111</name>
</gene>
<accession>A7H1H8</accession>
<name>ATPD_CAMJD</name>
<feature type="chain" id="PRO_0000382075" description="ATP synthase subunit delta">
    <location>
        <begin position="1"/>
        <end position="173"/>
    </location>
</feature>
<reference key="1">
    <citation type="submission" date="2007-07" db="EMBL/GenBank/DDBJ databases">
        <title>Complete genome sequence of Campylobacter jejuni subsp doylei 269.97 isolated from human blood.</title>
        <authorList>
            <person name="Fouts D.E."/>
            <person name="Mongodin E.F."/>
            <person name="Puiu D."/>
            <person name="Sebastian Y."/>
            <person name="Miller W.G."/>
            <person name="Mandrell R.E."/>
            <person name="Lastovica A.J."/>
            <person name="Nelson K.E."/>
        </authorList>
    </citation>
    <scope>NUCLEOTIDE SEQUENCE [LARGE SCALE GENOMIC DNA]</scope>
    <source>
        <strain>ATCC BAA-1458 / RM4099 / 269.97</strain>
    </source>
</reference>
<protein>
    <recommendedName>
        <fullName evidence="1">ATP synthase subunit delta</fullName>
    </recommendedName>
    <alternativeName>
        <fullName evidence="1">ATP synthase F(1) sector subunit delta</fullName>
    </alternativeName>
    <alternativeName>
        <fullName evidence="1">F-type ATPase subunit delta</fullName>
        <shortName evidence="1">F-ATPase subunit delta</shortName>
    </alternativeName>
</protein>
<dbReference type="EMBL" id="CP000768">
    <property type="protein sequence ID" value="ABS43795.1"/>
    <property type="molecule type" value="Genomic_DNA"/>
</dbReference>
<dbReference type="SMR" id="A7H1H8"/>
<dbReference type="KEGG" id="cjd:JJD26997_0111"/>
<dbReference type="HOGENOM" id="CLU_085114_3_1_7"/>
<dbReference type="Proteomes" id="UP000002302">
    <property type="component" value="Chromosome"/>
</dbReference>
<dbReference type="GO" id="GO:0005886">
    <property type="term" value="C:plasma membrane"/>
    <property type="evidence" value="ECO:0007669"/>
    <property type="project" value="UniProtKB-SubCell"/>
</dbReference>
<dbReference type="GO" id="GO:0045259">
    <property type="term" value="C:proton-transporting ATP synthase complex"/>
    <property type="evidence" value="ECO:0007669"/>
    <property type="project" value="UniProtKB-KW"/>
</dbReference>
<dbReference type="GO" id="GO:0046933">
    <property type="term" value="F:proton-transporting ATP synthase activity, rotational mechanism"/>
    <property type="evidence" value="ECO:0007669"/>
    <property type="project" value="UniProtKB-UniRule"/>
</dbReference>
<dbReference type="Gene3D" id="1.10.520.20">
    <property type="entry name" value="N-terminal domain of the delta subunit of the F1F0-ATP synthase"/>
    <property type="match status" value="1"/>
</dbReference>
<dbReference type="HAMAP" id="MF_01416">
    <property type="entry name" value="ATP_synth_delta_bact"/>
    <property type="match status" value="1"/>
</dbReference>
<dbReference type="InterPro" id="IPR026015">
    <property type="entry name" value="ATP_synth_OSCP/delta_N_sf"/>
</dbReference>
<dbReference type="InterPro" id="IPR000711">
    <property type="entry name" value="ATPase_OSCP/dsu"/>
</dbReference>
<dbReference type="NCBIfam" id="TIGR01145">
    <property type="entry name" value="ATP_synt_delta"/>
    <property type="match status" value="1"/>
</dbReference>
<dbReference type="NCBIfam" id="NF006291">
    <property type="entry name" value="PRK08474.1"/>
    <property type="match status" value="1"/>
</dbReference>
<dbReference type="PANTHER" id="PTHR11910">
    <property type="entry name" value="ATP SYNTHASE DELTA CHAIN"/>
    <property type="match status" value="1"/>
</dbReference>
<dbReference type="Pfam" id="PF00213">
    <property type="entry name" value="OSCP"/>
    <property type="match status" value="1"/>
</dbReference>
<dbReference type="PRINTS" id="PR00125">
    <property type="entry name" value="ATPASEDELTA"/>
</dbReference>
<dbReference type="SUPFAM" id="SSF47928">
    <property type="entry name" value="N-terminal domain of the delta subunit of the F1F0-ATP synthase"/>
    <property type="match status" value="1"/>
</dbReference>
<sequence>MENIIARRYAKAIASRADINDFYQNLCILNSAFVLPKFKNIIESNEIKKERKMEFLDSFFHIKNSSFQNFLRLLIENSRLECIPQIVKELERQKAFKENIFVGIVHSKEKLSQENLKDLEVKLNKKFNANIKLNNKISQDDSVKIELEELGYELSFSMKALQNKLNEYVLKII</sequence>
<keyword id="KW-0066">ATP synthesis</keyword>
<keyword id="KW-0997">Cell inner membrane</keyword>
<keyword id="KW-1003">Cell membrane</keyword>
<keyword id="KW-0139">CF(1)</keyword>
<keyword id="KW-0375">Hydrogen ion transport</keyword>
<keyword id="KW-0406">Ion transport</keyword>
<keyword id="KW-0472">Membrane</keyword>
<keyword id="KW-0813">Transport</keyword>
<proteinExistence type="inferred from homology"/>
<evidence type="ECO:0000255" key="1">
    <source>
        <dbReference type="HAMAP-Rule" id="MF_01416"/>
    </source>
</evidence>